<reference key="1">
    <citation type="submission" date="2006-12" db="EMBL/GenBank/DDBJ databases">
        <title>Complete sequence of chromosome of Mycobacterium sp. KMS.</title>
        <authorList>
            <consortium name="US DOE Joint Genome Institute"/>
            <person name="Copeland A."/>
            <person name="Lucas S."/>
            <person name="Lapidus A."/>
            <person name="Barry K."/>
            <person name="Detter J.C."/>
            <person name="Glavina del Rio T."/>
            <person name="Hammon N."/>
            <person name="Israni S."/>
            <person name="Dalin E."/>
            <person name="Tice H."/>
            <person name="Pitluck S."/>
            <person name="Kiss H."/>
            <person name="Brettin T."/>
            <person name="Bruce D."/>
            <person name="Han C."/>
            <person name="Tapia R."/>
            <person name="Gilna P."/>
            <person name="Schmutz J."/>
            <person name="Larimer F."/>
            <person name="Land M."/>
            <person name="Hauser L."/>
            <person name="Kyrpides N."/>
            <person name="Mikhailova N."/>
            <person name="Miller C.D."/>
            <person name="Richardson P."/>
        </authorList>
    </citation>
    <scope>NUCLEOTIDE SEQUENCE [LARGE SCALE GENOMIC DNA]</scope>
    <source>
        <strain>KMS</strain>
    </source>
</reference>
<name>ATPA_MYCSK</name>
<evidence type="ECO:0000255" key="1">
    <source>
        <dbReference type="HAMAP-Rule" id="MF_01346"/>
    </source>
</evidence>
<evidence type="ECO:0000256" key="2">
    <source>
        <dbReference type="SAM" id="MobiDB-lite"/>
    </source>
</evidence>
<dbReference type="EC" id="7.1.2.2" evidence="1"/>
<dbReference type="EMBL" id="CP000518">
    <property type="protein sequence ID" value="ABL93144.1"/>
    <property type="molecule type" value="Genomic_DNA"/>
</dbReference>
<dbReference type="SMR" id="A1UJY6"/>
<dbReference type="STRING" id="189918.Mkms_3952"/>
<dbReference type="KEGG" id="mkm:Mkms_3952"/>
<dbReference type="HOGENOM" id="CLU_010091_2_1_11"/>
<dbReference type="OrthoDB" id="9803053at2"/>
<dbReference type="GO" id="GO:0005886">
    <property type="term" value="C:plasma membrane"/>
    <property type="evidence" value="ECO:0007669"/>
    <property type="project" value="UniProtKB-SubCell"/>
</dbReference>
<dbReference type="GO" id="GO:0045259">
    <property type="term" value="C:proton-transporting ATP synthase complex"/>
    <property type="evidence" value="ECO:0007669"/>
    <property type="project" value="UniProtKB-KW"/>
</dbReference>
<dbReference type="GO" id="GO:0043531">
    <property type="term" value="F:ADP binding"/>
    <property type="evidence" value="ECO:0007669"/>
    <property type="project" value="TreeGrafter"/>
</dbReference>
<dbReference type="GO" id="GO:0005524">
    <property type="term" value="F:ATP binding"/>
    <property type="evidence" value="ECO:0007669"/>
    <property type="project" value="UniProtKB-UniRule"/>
</dbReference>
<dbReference type="GO" id="GO:0046933">
    <property type="term" value="F:proton-transporting ATP synthase activity, rotational mechanism"/>
    <property type="evidence" value="ECO:0007669"/>
    <property type="project" value="UniProtKB-UniRule"/>
</dbReference>
<dbReference type="CDD" id="cd18113">
    <property type="entry name" value="ATP-synt_F1_alpha_C"/>
    <property type="match status" value="1"/>
</dbReference>
<dbReference type="CDD" id="cd18116">
    <property type="entry name" value="ATP-synt_F1_alpha_N"/>
    <property type="match status" value="1"/>
</dbReference>
<dbReference type="CDD" id="cd01132">
    <property type="entry name" value="F1-ATPase_alpha_CD"/>
    <property type="match status" value="1"/>
</dbReference>
<dbReference type="FunFam" id="1.20.150.20:FF:000001">
    <property type="entry name" value="ATP synthase subunit alpha"/>
    <property type="match status" value="1"/>
</dbReference>
<dbReference type="FunFam" id="2.40.30.20:FF:000001">
    <property type="entry name" value="ATP synthase subunit alpha"/>
    <property type="match status" value="1"/>
</dbReference>
<dbReference type="FunFam" id="3.40.50.300:FF:000002">
    <property type="entry name" value="ATP synthase subunit alpha"/>
    <property type="match status" value="1"/>
</dbReference>
<dbReference type="Gene3D" id="2.40.30.20">
    <property type="match status" value="1"/>
</dbReference>
<dbReference type="Gene3D" id="1.20.150.20">
    <property type="entry name" value="ATP synthase alpha/beta chain, C-terminal domain"/>
    <property type="match status" value="1"/>
</dbReference>
<dbReference type="Gene3D" id="3.40.50.300">
    <property type="entry name" value="P-loop containing nucleotide triphosphate hydrolases"/>
    <property type="match status" value="1"/>
</dbReference>
<dbReference type="HAMAP" id="MF_01346">
    <property type="entry name" value="ATP_synth_alpha_bact"/>
    <property type="match status" value="1"/>
</dbReference>
<dbReference type="InterPro" id="IPR023366">
    <property type="entry name" value="ATP_synth_asu-like_sf"/>
</dbReference>
<dbReference type="InterPro" id="IPR000793">
    <property type="entry name" value="ATP_synth_asu_C"/>
</dbReference>
<dbReference type="InterPro" id="IPR038376">
    <property type="entry name" value="ATP_synth_asu_C_sf"/>
</dbReference>
<dbReference type="InterPro" id="IPR033732">
    <property type="entry name" value="ATP_synth_F1_a_nt-bd_dom"/>
</dbReference>
<dbReference type="InterPro" id="IPR005294">
    <property type="entry name" value="ATP_synth_F1_asu"/>
</dbReference>
<dbReference type="InterPro" id="IPR020003">
    <property type="entry name" value="ATPase_a/bsu_AS"/>
</dbReference>
<dbReference type="InterPro" id="IPR004100">
    <property type="entry name" value="ATPase_F1/V1/A1_a/bsu_N"/>
</dbReference>
<dbReference type="InterPro" id="IPR036121">
    <property type="entry name" value="ATPase_F1/V1/A1_a/bsu_N_sf"/>
</dbReference>
<dbReference type="InterPro" id="IPR000194">
    <property type="entry name" value="ATPase_F1/V1/A1_a/bsu_nucl-bd"/>
</dbReference>
<dbReference type="InterPro" id="IPR027417">
    <property type="entry name" value="P-loop_NTPase"/>
</dbReference>
<dbReference type="NCBIfam" id="TIGR00962">
    <property type="entry name" value="atpA"/>
    <property type="match status" value="1"/>
</dbReference>
<dbReference type="NCBIfam" id="NF009884">
    <property type="entry name" value="PRK13343.1"/>
    <property type="match status" value="1"/>
</dbReference>
<dbReference type="PANTHER" id="PTHR48082">
    <property type="entry name" value="ATP SYNTHASE SUBUNIT ALPHA, MITOCHONDRIAL"/>
    <property type="match status" value="1"/>
</dbReference>
<dbReference type="PANTHER" id="PTHR48082:SF2">
    <property type="entry name" value="ATP SYNTHASE SUBUNIT ALPHA, MITOCHONDRIAL"/>
    <property type="match status" value="1"/>
</dbReference>
<dbReference type="Pfam" id="PF00006">
    <property type="entry name" value="ATP-synt_ab"/>
    <property type="match status" value="1"/>
</dbReference>
<dbReference type="Pfam" id="PF00306">
    <property type="entry name" value="ATP-synt_ab_C"/>
    <property type="match status" value="1"/>
</dbReference>
<dbReference type="Pfam" id="PF02874">
    <property type="entry name" value="ATP-synt_ab_N"/>
    <property type="match status" value="1"/>
</dbReference>
<dbReference type="SUPFAM" id="SSF47917">
    <property type="entry name" value="C-terminal domain of alpha and beta subunits of F1 ATP synthase"/>
    <property type="match status" value="1"/>
</dbReference>
<dbReference type="SUPFAM" id="SSF50615">
    <property type="entry name" value="N-terminal domain of alpha and beta subunits of F1 ATP synthase"/>
    <property type="match status" value="1"/>
</dbReference>
<dbReference type="SUPFAM" id="SSF52540">
    <property type="entry name" value="P-loop containing nucleoside triphosphate hydrolases"/>
    <property type="match status" value="1"/>
</dbReference>
<dbReference type="PROSITE" id="PS00152">
    <property type="entry name" value="ATPASE_ALPHA_BETA"/>
    <property type="match status" value="1"/>
</dbReference>
<keyword id="KW-0066">ATP synthesis</keyword>
<keyword id="KW-0067">ATP-binding</keyword>
<keyword id="KW-1003">Cell membrane</keyword>
<keyword id="KW-0139">CF(1)</keyword>
<keyword id="KW-0375">Hydrogen ion transport</keyword>
<keyword id="KW-0406">Ion transport</keyword>
<keyword id="KW-0472">Membrane</keyword>
<keyword id="KW-0547">Nucleotide-binding</keyword>
<keyword id="KW-1278">Translocase</keyword>
<keyword id="KW-0813">Transport</keyword>
<gene>
    <name evidence="1" type="primary">atpA</name>
    <name type="ordered locus">Mkms_3952</name>
</gene>
<feature type="chain" id="PRO_0000302671" description="ATP synthase subunit alpha">
    <location>
        <begin position="1"/>
        <end position="548"/>
    </location>
</feature>
<feature type="region of interest" description="Disordered" evidence="2">
    <location>
        <begin position="511"/>
        <end position="548"/>
    </location>
</feature>
<feature type="compositionally biased region" description="Acidic residues" evidence="2">
    <location>
        <begin position="523"/>
        <end position="534"/>
    </location>
</feature>
<feature type="binding site" evidence="1">
    <location>
        <begin position="172"/>
        <end position="179"/>
    </location>
    <ligand>
        <name>ATP</name>
        <dbReference type="ChEBI" id="CHEBI:30616"/>
    </ligand>
</feature>
<feature type="site" description="Required for activity" evidence="1">
    <location>
        <position position="373"/>
    </location>
</feature>
<proteinExistence type="inferred from homology"/>
<comment type="function">
    <text evidence="1">Produces ATP from ADP in the presence of a proton gradient across the membrane. The alpha chain is a regulatory subunit.</text>
</comment>
<comment type="catalytic activity">
    <reaction evidence="1">
        <text>ATP + H2O + 4 H(+)(in) = ADP + phosphate + 5 H(+)(out)</text>
        <dbReference type="Rhea" id="RHEA:57720"/>
        <dbReference type="ChEBI" id="CHEBI:15377"/>
        <dbReference type="ChEBI" id="CHEBI:15378"/>
        <dbReference type="ChEBI" id="CHEBI:30616"/>
        <dbReference type="ChEBI" id="CHEBI:43474"/>
        <dbReference type="ChEBI" id="CHEBI:456216"/>
        <dbReference type="EC" id="7.1.2.2"/>
    </reaction>
</comment>
<comment type="subunit">
    <text evidence="1">F-type ATPases have 2 components, CF(1) - the catalytic core - and CF(0) - the membrane proton channel. CF(1) has five subunits: alpha(3), beta(3), gamma(1), delta(1), epsilon(1). CF(0) has three main subunits: a(1), b(2) and c(9-12). The alpha and beta chains form an alternating ring which encloses part of the gamma chain. CF(1) is attached to CF(0) by a central stalk formed by the gamma and epsilon chains, while a peripheral stalk is formed by the delta and b chains.</text>
</comment>
<comment type="subcellular location">
    <subcellularLocation>
        <location evidence="1">Cell membrane</location>
        <topology evidence="1">Peripheral membrane protein</topology>
    </subcellularLocation>
</comment>
<comment type="similarity">
    <text evidence="1">Belongs to the ATPase alpha/beta chains family.</text>
</comment>
<sequence>MAELTISAADIQGAIEDYVANFATDTEREEIGTVIDAGDGIAHVEGLPSVMTQELLEFPGGVLGVALNLDEHSIGAVILGDFEKIEEGQQVKRTGEVLSVPVGDGYLGRVVNPLGQPIDGRGEIETTDRRALELQAPSVVQRQGVSEPLQTGIKAIDSQTPIGRGQRQLIIGDRKTGKTAVCVDTILNQRQNWETGDPNQQVRCVYVAIGQKGTTIASVRRTLEEGGAMDYTTIVAAPASDSAGFKWLAPYTGSAIAQHWMYDGKHVLIVFDDLTKHAEAYRAISLLLRRPPGREAFPGDVFYLHSRLLERCAKLSDELGGGSMTGLPLIETKANDISAYIPTNVISITDGQCFLETDLFNQGVRPAINVGVSVSRVGGAAQIKAMKEVAGSLRLDLSQYRELESFAAFASDLDATSKAQLDRGARLVELLKQPQNSPMPVEEQVVAIFLGTRGHLDTVPVEDVQRFEQELLEHVRSSKEEIFTEIRESKKLSDELEKTLTDVVNEFKKGFETTSGESVVPDENVEAMSEDDVEKESVKVRKPAPKKK</sequence>
<accession>A1UJY6</accession>
<protein>
    <recommendedName>
        <fullName evidence="1">ATP synthase subunit alpha</fullName>
        <ecNumber evidence="1">7.1.2.2</ecNumber>
    </recommendedName>
    <alternativeName>
        <fullName evidence="1">ATP synthase F1 sector subunit alpha</fullName>
    </alternativeName>
    <alternativeName>
        <fullName evidence="1">F-ATPase subunit alpha</fullName>
    </alternativeName>
</protein>
<organism>
    <name type="scientific">Mycobacterium sp. (strain KMS)</name>
    <dbReference type="NCBI Taxonomy" id="189918"/>
    <lineage>
        <taxon>Bacteria</taxon>
        <taxon>Bacillati</taxon>
        <taxon>Actinomycetota</taxon>
        <taxon>Actinomycetes</taxon>
        <taxon>Mycobacteriales</taxon>
        <taxon>Mycobacteriaceae</taxon>
        <taxon>Mycobacterium</taxon>
    </lineage>
</organism>